<organism>
    <name type="scientific">Conus arenatus</name>
    <name type="common">Sand-dusted cone</name>
    <dbReference type="NCBI Taxonomy" id="89451"/>
    <lineage>
        <taxon>Eukaryota</taxon>
        <taxon>Metazoa</taxon>
        <taxon>Spiralia</taxon>
        <taxon>Lophotrochozoa</taxon>
        <taxon>Mollusca</taxon>
        <taxon>Gastropoda</taxon>
        <taxon>Caenogastropoda</taxon>
        <taxon>Neogastropoda</taxon>
        <taxon>Conoidea</taxon>
        <taxon>Conidae</taxon>
        <taxon>Conus</taxon>
    </lineage>
</organism>
<name>CT51_CONAE</name>
<comment type="subcellular location">
    <subcellularLocation>
        <location evidence="3">Secreted</location>
    </subcellularLocation>
</comment>
<comment type="tissue specificity">
    <text evidence="3">Expressed by the venom duct.</text>
</comment>
<comment type="domain">
    <text evidence="2">The cysteine framework is V (CC-CC).</text>
</comment>
<comment type="PTM">
    <text evidence="2">Contains 2 disulfide bonds that can be either 'C1-C3, C2-C4' or 'C1-C4, C2-C3', since these disulfide connectivities have been observed for conotoxins with cysteine framework V (for examples, see AC P0DQQ7 and AC P81755).</text>
</comment>
<comment type="similarity">
    <text evidence="2">Belongs to the conotoxin T superfamily.</text>
</comment>
<dbReference type="EMBL" id="AF214989">
    <property type="protein sequence ID" value="AAG60417.1"/>
    <property type="molecule type" value="mRNA"/>
</dbReference>
<dbReference type="EMBL" id="AF215100">
    <property type="protein sequence ID" value="AAG60521.1"/>
    <property type="molecule type" value="mRNA"/>
</dbReference>
<dbReference type="ConoServer" id="676">
    <property type="toxin name" value="Ar5.1 precursor"/>
</dbReference>
<dbReference type="GO" id="GO:0005576">
    <property type="term" value="C:extracellular region"/>
    <property type="evidence" value="ECO:0007669"/>
    <property type="project" value="UniProtKB-SubCell"/>
</dbReference>
<dbReference type="GO" id="GO:0008200">
    <property type="term" value="F:ion channel inhibitor activity"/>
    <property type="evidence" value="ECO:0007669"/>
    <property type="project" value="InterPro"/>
</dbReference>
<dbReference type="GO" id="GO:0090729">
    <property type="term" value="F:toxin activity"/>
    <property type="evidence" value="ECO:0007669"/>
    <property type="project" value="UniProtKB-KW"/>
</dbReference>
<dbReference type="InterPro" id="IPR004214">
    <property type="entry name" value="Conotoxin"/>
</dbReference>
<dbReference type="Pfam" id="PF02950">
    <property type="entry name" value="Conotoxin"/>
    <property type="match status" value="1"/>
</dbReference>
<sequence>MLCLPVFIILLLLASPAASNPLETRIQSDLIRAALEDADMKNEKNILSSIMGSLGTIGNVVGNVCCSITKSCCASEE</sequence>
<reference key="1">
    <citation type="journal article" date="2001" name="Mol. Biol. Evol.">
        <title>Mechanisms for evolving hypervariability: the case of conopeptides.</title>
        <authorList>
            <person name="Conticello S.G."/>
            <person name="Gilad Y."/>
            <person name="Avidan N."/>
            <person name="Ben-Asher E."/>
            <person name="Levy Z."/>
            <person name="Fainzilber M."/>
        </authorList>
    </citation>
    <scope>NUCLEOTIDE SEQUENCE [MRNA]</scope>
    <source>
        <tissue>Venom duct</tissue>
    </source>
</reference>
<keyword id="KW-1015">Disulfide bond</keyword>
<keyword id="KW-0528">Neurotoxin</keyword>
<keyword id="KW-0964">Secreted</keyword>
<keyword id="KW-0732">Signal</keyword>
<keyword id="KW-0800">Toxin</keyword>
<protein>
    <recommendedName>
        <fullName evidence="2">Conotoxin Ar5.1 a</fullName>
    </recommendedName>
    <alternativeName>
        <fullName evidence="4">Conotoxin ArMLCL-D02171</fullName>
    </alternativeName>
    <alternativeName>
        <fullName evidence="5">Conotoxin ArMLCL-D02172</fullName>
    </alternativeName>
</protein>
<evidence type="ECO:0000255" key="1"/>
<evidence type="ECO:0000305" key="2"/>
<evidence type="ECO:0000305" key="3">
    <source>
    </source>
</evidence>
<evidence type="ECO:0000312" key="4">
    <source>
        <dbReference type="EMBL" id="AAG60417.1"/>
    </source>
</evidence>
<evidence type="ECO:0000312" key="5">
    <source>
        <dbReference type="EMBL" id="AAG60521.1"/>
    </source>
</evidence>
<proteinExistence type="inferred from homology"/>
<feature type="signal peptide" evidence="1">
    <location>
        <begin position="1"/>
        <end position="19"/>
    </location>
</feature>
<feature type="propeptide" id="PRO_0000404938" evidence="1">
    <location>
        <begin position="20"/>
        <end position="44"/>
    </location>
</feature>
<feature type="peptide" id="PRO_0000404939" description="Conotoxin Ar5.1 a" evidence="1">
    <location>
        <begin position="45"/>
        <end position="77"/>
    </location>
</feature>
<accession>Q9BHA6</accession>